<evidence type="ECO:0000250" key="1">
    <source>
        <dbReference type="UniProtKB" id="P19624"/>
    </source>
</evidence>
<evidence type="ECO:0000305" key="2"/>
<comment type="function">
    <text evidence="1">Catalyzes the NAD(P)-dependent oxidation of 4-(phosphooxy)-L-threonine (HTP) into 2-amino-3-oxo-4-(phosphooxy)butyric acid which spontaneously decarboxylates to form 3-amino-2-oxopropyl phosphate (AHAP).</text>
</comment>
<comment type="catalytic activity">
    <reaction evidence="1">
        <text>4-(phosphooxy)-L-threonine + NAD(+) = 3-amino-2-oxopropyl phosphate + CO2 + NADH</text>
        <dbReference type="Rhea" id="RHEA:32275"/>
        <dbReference type="ChEBI" id="CHEBI:16526"/>
        <dbReference type="ChEBI" id="CHEBI:57279"/>
        <dbReference type="ChEBI" id="CHEBI:57540"/>
        <dbReference type="ChEBI" id="CHEBI:57945"/>
        <dbReference type="ChEBI" id="CHEBI:58452"/>
        <dbReference type="EC" id="1.1.1.262"/>
    </reaction>
</comment>
<comment type="cofactor">
    <cofactor evidence="1">
        <name>a divalent metal cation</name>
        <dbReference type="ChEBI" id="CHEBI:60240"/>
    </cofactor>
    <text evidence="1">Binds 1 divalent metal cation per subunit.</text>
</comment>
<comment type="pathway">
    <text evidence="1">Cofactor biosynthesis; pyridoxine 5'-phosphate biosynthesis; pyridoxine 5'-phosphate from D-erythrose 4-phosphate: step 4/5.</text>
</comment>
<comment type="subunit">
    <text evidence="1">Homodimer.</text>
</comment>
<comment type="subcellular location">
    <subcellularLocation>
        <location evidence="1">Cytoplasm</location>
    </subcellularLocation>
</comment>
<comment type="miscellaneous">
    <text evidence="1">The active site is located at the dimer interface.</text>
</comment>
<comment type="similarity">
    <text evidence="2">Belongs to the PdxA family.</text>
</comment>
<gene>
    <name evidence="1" type="primary">pdxA</name>
    <name type="ordered locus">SYO3AOP1_0946</name>
</gene>
<protein>
    <recommendedName>
        <fullName evidence="1">4-hydroxythreonine-4-phosphate dehydrogenase</fullName>
        <ecNumber evidence="1">1.1.1.262</ecNumber>
    </recommendedName>
    <alternativeName>
        <fullName evidence="1">4-(phosphohydroxy)-L-threonine dehydrogenase</fullName>
    </alternativeName>
</protein>
<feature type="chain" id="PRO_1000146493" description="4-hydroxythreonine-4-phosphate dehydrogenase">
    <location>
        <begin position="1"/>
        <end position="322"/>
    </location>
</feature>
<feature type="binding site" evidence="1">
    <location>
        <position position="131"/>
    </location>
    <ligand>
        <name>substrate</name>
    </ligand>
</feature>
<feature type="binding site" evidence="1">
    <location>
        <position position="132"/>
    </location>
    <ligand>
        <name>substrate</name>
    </ligand>
</feature>
<feature type="binding site" evidence="1">
    <location>
        <position position="161"/>
    </location>
    <ligand>
        <name>a divalent metal cation</name>
        <dbReference type="ChEBI" id="CHEBI:60240"/>
        <note>ligand shared between dimeric partners</note>
    </ligand>
</feature>
<feature type="binding site" evidence="1">
    <location>
        <position position="206"/>
    </location>
    <ligand>
        <name>a divalent metal cation</name>
        <dbReference type="ChEBI" id="CHEBI:60240"/>
        <note>ligand shared between dimeric partners</note>
    </ligand>
</feature>
<feature type="binding site" evidence="1">
    <location>
        <position position="259"/>
    </location>
    <ligand>
        <name>a divalent metal cation</name>
        <dbReference type="ChEBI" id="CHEBI:60240"/>
        <note>ligand shared between dimeric partners</note>
    </ligand>
</feature>
<feature type="binding site" evidence="1">
    <location>
        <position position="267"/>
    </location>
    <ligand>
        <name>substrate</name>
    </ligand>
</feature>
<feature type="binding site" evidence="1">
    <location>
        <position position="276"/>
    </location>
    <ligand>
        <name>substrate</name>
    </ligand>
</feature>
<feature type="binding site" evidence="1">
    <location>
        <position position="285"/>
    </location>
    <ligand>
        <name>substrate</name>
    </ligand>
</feature>
<organism>
    <name type="scientific">Sulfurihydrogenibium sp. (strain YO3AOP1)</name>
    <dbReference type="NCBI Taxonomy" id="436114"/>
    <lineage>
        <taxon>Bacteria</taxon>
        <taxon>Pseudomonadati</taxon>
        <taxon>Aquificota</taxon>
        <taxon>Aquificia</taxon>
        <taxon>Aquificales</taxon>
        <taxon>Hydrogenothermaceae</taxon>
        <taxon>Sulfurihydrogenibium</taxon>
    </lineage>
</organism>
<reference key="1">
    <citation type="journal article" date="2009" name="J. Bacteriol.">
        <title>Complete and draft genome sequences of six members of the Aquificales.</title>
        <authorList>
            <person name="Reysenbach A.-L."/>
            <person name="Hamamura N."/>
            <person name="Podar M."/>
            <person name="Griffiths E."/>
            <person name="Ferreira S."/>
            <person name="Hochstein R."/>
            <person name="Heidelberg J."/>
            <person name="Johnson J."/>
            <person name="Mead D."/>
            <person name="Pohorille A."/>
            <person name="Sarmiento M."/>
            <person name="Schweighofer K."/>
            <person name="Seshadri R."/>
            <person name="Voytek M.A."/>
        </authorList>
    </citation>
    <scope>NUCLEOTIDE SEQUENCE [LARGE SCALE GENOMIC DNA]</scope>
    <source>
        <strain>YO3AOP1</strain>
    </source>
</reference>
<sequence length="322" mass="35609">MVKLAITLGDPSGINSEILLKALNKLPKRNISYVIYGSKKALEKAKKLTGVDLNIKEIKSINDVVKSGIYLINLYDLDVEFGSSSKETGKASVVYLENAVKDVLEKKADALITLPISKQWIMESGFPYAGHTDYLAEVSGAKEYAMVLMCKKLKVALITTHIPLKDVPSQITKEKIISKVRLINREFKEKFGISKPKIAILGLNPHASDNGNIGNEEQNIILPAVKTLREDGIEITDPLSPDTAFNRYKDFDIYVAMYHDQGLIPLKLLCFRKAVNITLGLPFIRTSPDHGTGYDIAGKNIADPSSTIEAVELAILLKRVRK</sequence>
<dbReference type="EC" id="1.1.1.262" evidence="1"/>
<dbReference type="EMBL" id="CP001080">
    <property type="protein sequence ID" value="ACD66569.1"/>
    <property type="molecule type" value="Genomic_DNA"/>
</dbReference>
<dbReference type="RefSeq" id="WP_012459640.1">
    <property type="nucleotide sequence ID" value="NC_010730.1"/>
</dbReference>
<dbReference type="SMR" id="B2V9E6"/>
<dbReference type="STRING" id="436114.SYO3AOP1_0946"/>
<dbReference type="KEGG" id="sul:SYO3AOP1_0946"/>
<dbReference type="eggNOG" id="COG1995">
    <property type="taxonomic scope" value="Bacteria"/>
</dbReference>
<dbReference type="HOGENOM" id="CLU_040168_0_0_0"/>
<dbReference type="UniPathway" id="UPA00244">
    <property type="reaction ID" value="UER00312"/>
</dbReference>
<dbReference type="GO" id="GO:0005737">
    <property type="term" value="C:cytoplasm"/>
    <property type="evidence" value="ECO:0007669"/>
    <property type="project" value="UniProtKB-SubCell"/>
</dbReference>
<dbReference type="GO" id="GO:0050570">
    <property type="term" value="F:4-hydroxythreonine-4-phosphate dehydrogenase activity"/>
    <property type="evidence" value="ECO:0007669"/>
    <property type="project" value="UniProtKB-EC"/>
</dbReference>
<dbReference type="GO" id="GO:0046872">
    <property type="term" value="F:metal ion binding"/>
    <property type="evidence" value="ECO:0007669"/>
    <property type="project" value="UniProtKB-KW"/>
</dbReference>
<dbReference type="GO" id="GO:0051287">
    <property type="term" value="F:NAD binding"/>
    <property type="evidence" value="ECO:0007669"/>
    <property type="project" value="InterPro"/>
</dbReference>
<dbReference type="GO" id="GO:0008615">
    <property type="term" value="P:pyridoxine biosynthetic process"/>
    <property type="evidence" value="ECO:0007669"/>
    <property type="project" value="UniProtKB-KW"/>
</dbReference>
<dbReference type="Gene3D" id="3.40.718.10">
    <property type="entry name" value="Isopropylmalate Dehydrogenase"/>
    <property type="match status" value="1"/>
</dbReference>
<dbReference type="InterPro" id="IPR005255">
    <property type="entry name" value="PdxA_fam"/>
</dbReference>
<dbReference type="NCBIfam" id="TIGR00557">
    <property type="entry name" value="pdxA"/>
    <property type="match status" value="1"/>
</dbReference>
<dbReference type="PANTHER" id="PTHR30004">
    <property type="entry name" value="4-HYDROXYTHREONINE-4-PHOSPHATE DEHYDROGENASE"/>
    <property type="match status" value="1"/>
</dbReference>
<dbReference type="PANTHER" id="PTHR30004:SF6">
    <property type="entry name" value="D-THREONATE 4-PHOSPHATE DEHYDROGENASE"/>
    <property type="match status" value="1"/>
</dbReference>
<dbReference type="Pfam" id="PF04166">
    <property type="entry name" value="PdxA"/>
    <property type="match status" value="1"/>
</dbReference>
<dbReference type="SUPFAM" id="SSF53659">
    <property type="entry name" value="Isocitrate/Isopropylmalate dehydrogenase-like"/>
    <property type="match status" value="1"/>
</dbReference>
<name>PDXA_SULSY</name>
<proteinExistence type="inferred from homology"/>
<accession>B2V9E6</accession>
<keyword id="KW-0963">Cytoplasm</keyword>
<keyword id="KW-0479">Metal-binding</keyword>
<keyword id="KW-0520">NAD</keyword>
<keyword id="KW-0521">NADP</keyword>
<keyword id="KW-0560">Oxidoreductase</keyword>
<keyword id="KW-0664">Pyridoxine biosynthesis</keyword>